<protein>
    <recommendedName>
        <fullName evidence="1">Dihydroorotase</fullName>
        <shortName evidence="1">DHOase</shortName>
        <ecNumber evidence="1">3.5.2.3</ecNumber>
    </recommendedName>
</protein>
<gene>
    <name evidence="1" type="primary">pyrC</name>
    <name type="ordered locus">spyM18_0965</name>
</gene>
<reference key="1">
    <citation type="journal article" date="2002" name="Proc. Natl. Acad. Sci. U.S.A.">
        <title>Genome sequence and comparative microarray analysis of serotype M18 group A Streptococcus strains associated with acute rheumatic fever outbreaks.</title>
        <authorList>
            <person name="Smoot J.C."/>
            <person name="Barbian K.D."/>
            <person name="Van Gompel J.J."/>
            <person name="Smoot L.M."/>
            <person name="Chaussee M.S."/>
            <person name="Sylva G.L."/>
            <person name="Sturdevant D.E."/>
            <person name="Ricklefs S.M."/>
            <person name="Porcella S.F."/>
            <person name="Parkins L.D."/>
            <person name="Beres S.B."/>
            <person name="Campbell D.S."/>
            <person name="Smith T.M."/>
            <person name="Zhang Q."/>
            <person name="Kapur V."/>
            <person name="Daly J.A."/>
            <person name="Veasy L.G."/>
            <person name="Musser J.M."/>
        </authorList>
    </citation>
    <scope>NUCLEOTIDE SEQUENCE [LARGE SCALE GENOMIC DNA]</scope>
    <source>
        <strain>MGAS8232</strain>
    </source>
</reference>
<comment type="function">
    <text evidence="1">Catalyzes the reversible cyclization of carbamoyl aspartate to dihydroorotate.</text>
</comment>
<comment type="catalytic activity">
    <reaction evidence="1">
        <text>(S)-dihydroorotate + H2O = N-carbamoyl-L-aspartate + H(+)</text>
        <dbReference type="Rhea" id="RHEA:24296"/>
        <dbReference type="ChEBI" id="CHEBI:15377"/>
        <dbReference type="ChEBI" id="CHEBI:15378"/>
        <dbReference type="ChEBI" id="CHEBI:30864"/>
        <dbReference type="ChEBI" id="CHEBI:32814"/>
        <dbReference type="EC" id="3.5.2.3"/>
    </reaction>
</comment>
<comment type="cofactor">
    <cofactor evidence="1">
        <name>Zn(2+)</name>
        <dbReference type="ChEBI" id="CHEBI:29105"/>
    </cofactor>
    <text evidence="1">Binds 2 Zn(2+) ions per subunit.</text>
</comment>
<comment type="pathway">
    <text evidence="1">Pyrimidine metabolism; UMP biosynthesis via de novo pathway; (S)-dihydroorotate from bicarbonate: step 3/3.</text>
</comment>
<comment type="similarity">
    <text evidence="1">Belongs to the metallo-dependent hydrolases superfamily. DHOase family. Class I DHOase subfamily.</text>
</comment>
<dbReference type="EC" id="3.5.2.3" evidence="1"/>
<dbReference type="EMBL" id="AE009949">
    <property type="protein sequence ID" value="AAL97606.1"/>
    <property type="molecule type" value="Genomic_DNA"/>
</dbReference>
<dbReference type="RefSeq" id="WP_002984912.1">
    <property type="nucleotide sequence ID" value="NC_003485.1"/>
</dbReference>
<dbReference type="SMR" id="Q7CNB0"/>
<dbReference type="KEGG" id="spm:spyM18_0965"/>
<dbReference type="HOGENOM" id="CLU_015572_1_0_9"/>
<dbReference type="UniPathway" id="UPA00070">
    <property type="reaction ID" value="UER00117"/>
</dbReference>
<dbReference type="GO" id="GO:0005737">
    <property type="term" value="C:cytoplasm"/>
    <property type="evidence" value="ECO:0007669"/>
    <property type="project" value="TreeGrafter"/>
</dbReference>
<dbReference type="GO" id="GO:0004038">
    <property type="term" value="F:allantoinase activity"/>
    <property type="evidence" value="ECO:0007669"/>
    <property type="project" value="TreeGrafter"/>
</dbReference>
<dbReference type="GO" id="GO:0004151">
    <property type="term" value="F:dihydroorotase activity"/>
    <property type="evidence" value="ECO:0007669"/>
    <property type="project" value="UniProtKB-UniRule"/>
</dbReference>
<dbReference type="GO" id="GO:0008270">
    <property type="term" value="F:zinc ion binding"/>
    <property type="evidence" value="ECO:0007669"/>
    <property type="project" value="UniProtKB-UniRule"/>
</dbReference>
<dbReference type="GO" id="GO:0044205">
    <property type="term" value="P:'de novo' UMP biosynthetic process"/>
    <property type="evidence" value="ECO:0007669"/>
    <property type="project" value="UniProtKB-UniRule"/>
</dbReference>
<dbReference type="GO" id="GO:0006145">
    <property type="term" value="P:purine nucleobase catabolic process"/>
    <property type="evidence" value="ECO:0007669"/>
    <property type="project" value="TreeGrafter"/>
</dbReference>
<dbReference type="CDD" id="cd01317">
    <property type="entry name" value="DHOase_IIa"/>
    <property type="match status" value="1"/>
</dbReference>
<dbReference type="Gene3D" id="3.20.20.140">
    <property type="entry name" value="Metal-dependent hydrolases"/>
    <property type="match status" value="1"/>
</dbReference>
<dbReference type="HAMAP" id="MF_00220_B">
    <property type="entry name" value="PyrC_classI_B"/>
    <property type="match status" value="1"/>
</dbReference>
<dbReference type="InterPro" id="IPR006680">
    <property type="entry name" value="Amidohydro-rel"/>
</dbReference>
<dbReference type="InterPro" id="IPR004722">
    <property type="entry name" value="DHOase"/>
</dbReference>
<dbReference type="InterPro" id="IPR050138">
    <property type="entry name" value="DHOase/Allantoinase_Hydrolase"/>
</dbReference>
<dbReference type="InterPro" id="IPR002195">
    <property type="entry name" value="Dihydroorotase_CS"/>
</dbReference>
<dbReference type="InterPro" id="IPR011059">
    <property type="entry name" value="Metal-dep_hydrolase_composite"/>
</dbReference>
<dbReference type="InterPro" id="IPR032466">
    <property type="entry name" value="Metal_Hydrolase"/>
</dbReference>
<dbReference type="NCBIfam" id="NF006839">
    <property type="entry name" value="PRK09357.1-4"/>
    <property type="match status" value="1"/>
</dbReference>
<dbReference type="NCBIfam" id="TIGR00857">
    <property type="entry name" value="pyrC_multi"/>
    <property type="match status" value="1"/>
</dbReference>
<dbReference type="PANTHER" id="PTHR43668">
    <property type="entry name" value="ALLANTOINASE"/>
    <property type="match status" value="1"/>
</dbReference>
<dbReference type="PANTHER" id="PTHR43668:SF2">
    <property type="entry name" value="ALLANTOINASE"/>
    <property type="match status" value="1"/>
</dbReference>
<dbReference type="Pfam" id="PF01979">
    <property type="entry name" value="Amidohydro_1"/>
    <property type="match status" value="1"/>
</dbReference>
<dbReference type="SUPFAM" id="SSF51338">
    <property type="entry name" value="Composite domain of metallo-dependent hydrolases"/>
    <property type="match status" value="1"/>
</dbReference>
<dbReference type="SUPFAM" id="SSF51556">
    <property type="entry name" value="Metallo-dependent hydrolases"/>
    <property type="match status" value="1"/>
</dbReference>
<dbReference type="PROSITE" id="PS00482">
    <property type="entry name" value="DIHYDROOROTASE_1"/>
    <property type="match status" value="1"/>
</dbReference>
<dbReference type="PROSITE" id="PS00483">
    <property type="entry name" value="DIHYDROOROTASE_2"/>
    <property type="match status" value="1"/>
</dbReference>
<keyword id="KW-0378">Hydrolase</keyword>
<keyword id="KW-0479">Metal-binding</keyword>
<keyword id="KW-0665">Pyrimidine biosynthesis</keyword>
<keyword id="KW-0862">Zinc</keyword>
<accession>Q7CNB0</accession>
<evidence type="ECO:0000255" key="1">
    <source>
        <dbReference type="HAMAP-Rule" id="MF_00220"/>
    </source>
</evidence>
<name>PYRC_STRP8</name>
<proteinExistence type="inferred from homology"/>
<sequence>MILIKNGRVMDPKSQRDQVADVLIDGKQIVKIASAIECQEAQVIDASGLIVAPGLVDIHVHFREPGQTHKEDIHTGALAAAAGGVTTVVMMANTNPVISDVETLQEVLASAAKEKIHIYTNASVTQAFNGKDVTDFKALLEAGAVSFSDDGIPLESSKVLKEAFDLANANQTFISLHEEDPQLNGVLGFNEGIAEEHFHFCGATGVAEYSMIARDVMIAYDRQAHVHIQHLSKAESVQVVAFAQQLGAKVTAEVSPQHFSTTEDLLLTAGTSAKMNPPLRTQRDRLAVIEGLKSGVITVIATDHAPHHKDEKAVDDMTKAPSGMTGLETSLSLGLTHLVEPGHLTLMSLLEKMTLNPALLYGFDAGYLAENGPADLVIFADKQERLITENFASKASNSPFIGNKLKGVVKYTIADGEVVYPN</sequence>
<organism>
    <name type="scientific">Streptococcus pyogenes serotype M18 (strain MGAS8232)</name>
    <dbReference type="NCBI Taxonomy" id="186103"/>
    <lineage>
        <taxon>Bacteria</taxon>
        <taxon>Bacillati</taxon>
        <taxon>Bacillota</taxon>
        <taxon>Bacilli</taxon>
        <taxon>Lactobacillales</taxon>
        <taxon>Streptococcaceae</taxon>
        <taxon>Streptococcus</taxon>
    </lineage>
</organism>
<feature type="chain" id="PRO_0000147260" description="Dihydroorotase">
    <location>
        <begin position="1"/>
        <end position="422"/>
    </location>
</feature>
<feature type="active site" evidence="1">
    <location>
        <position position="303"/>
    </location>
</feature>
<feature type="binding site" evidence="1">
    <location>
        <position position="59"/>
    </location>
    <ligand>
        <name>Zn(2+)</name>
        <dbReference type="ChEBI" id="CHEBI:29105"/>
        <label>1</label>
    </ligand>
</feature>
<feature type="binding site" evidence="1">
    <location>
        <begin position="61"/>
        <end position="63"/>
    </location>
    <ligand>
        <name>substrate</name>
    </ligand>
</feature>
<feature type="binding site" evidence="1">
    <location>
        <position position="61"/>
    </location>
    <ligand>
        <name>Zn(2+)</name>
        <dbReference type="ChEBI" id="CHEBI:29105"/>
        <label>1</label>
    </ligand>
</feature>
<feature type="binding site" evidence="1">
    <location>
        <position position="93"/>
    </location>
    <ligand>
        <name>substrate</name>
    </ligand>
</feature>
<feature type="binding site" evidence="1">
    <location>
        <position position="150"/>
    </location>
    <ligand>
        <name>Zn(2+)</name>
        <dbReference type="ChEBI" id="CHEBI:29105"/>
        <label>1</label>
    </ligand>
</feature>
<feature type="binding site" evidence="1">
    <location>
        <position position="150"/>
    </location>
    <ligand>
        <name>Zn(2+)</name>
        <dbReference type="ChEBI" id="CHEBI:29105"/>
        <label>2</label>
    </ligand>
</feature>
<feature type="binding site" evidence="1">
    <location>
        <position position="177"/>
    </location>
    <ligand>
        <name>Zn(2+)</name>
        <dbReference type="ChEBI" id="CHEBI:29105"/>
        <label>2</label>
    </ligand>
</feature>
<feature type="binding site" evidence="1">
    <location>
        <position position="230"/>
    </location>
    <ligand>
        <name>Zn(2+)</name>
        <dbReference type="ChEBI" id="CHEBI:29105"/>
        <label>2</label>
    </ligand>
</feature>
<feature type="binding site" evidence="1">
    <location>
        <position position="276"/>
    </location>
    <ligand>
        <name>substrate</name>
    </ligand>
</feature>
<feature type="binding site" evidence="1">
    <location>
        <position position="303"/>
    </location>
    <ligand>
        <name>Zn(2+)</name>
        <dbReference type="ChEBI" id="CHEBI:29105"/>
        <label>1</label>
    </ligand>
</feature>
<feature type="binding site" evidence="1">
    <location>
        <position position="307"/>
    </location>
    <ligand>
        <name>substrate</name>
    </ligand>
</feature>